<accession>A1KPT6</accession>
<dbReference type="EC" id="4.1.1.11" evidence="1"/>
<dbReference type="EMBL" id="AM408590">
    <property type="protein sequence ID" value="CAL73654.1"/>
    <property type="molecule type" value="Genomic_DNA"/>
</dbReference>
<dbReference type="RefSeq" id="WP_003419523.1">
    <property type="nucleotide sequence ID" value="NC_008769.1"/>
</dbReference>
<dbReference type="SMR" id="A1KPT6"/>
<dbReference type="KEGG" id="mbb:BCG_3665c"/>
<dbReference type="HOGENOM" id="CLU_115305_2_0_11"/>
<dbReference type="UniPathway" id="UPA00028">
    <property type="reaction ID" value="UER00002"/>
</dbReference>
<dbReference type="Proteomes" id="UP000001472">
    <property type="component" value="Chromosome"/>
</dbReference>
<dbReference type="GO" id="GO:0005829">
    <property type="term" value="C:cytosol"/>
    <property type="evidence" value="ECO:0007669"/>
    <property type="project" value="TreeGrafter"/>
</dbReference>
<dbReference type="GO" id="GO:0004068">
    <property type="term" value="F:aspartate 1-decarboxylase activity"/>
    <property type="evidence" value="ECO:0007669"/>
    <property type="project" value="UniProtKB-UniRule"/>
</dbReference>
<dbReference type="GO" id="GO:0006523">
    <property type="term" value="P:alanine biosynthetic process"/>
    <property type="evidence" value="ECO:0007669"/>
    <property type="project" value="InterPro"/>
</dbReference>
<dbReference type="GO" id="GO:0015940">
    <property type="term" value="P:pantothenate biosynthetic process"/>
    <property type="evidence" value="ECO:0007669"/>
    <property type="project" value="UniProtKB-UniRule"/>
</dbReference>
<dbReference type="CDD" id="cd06919">
    <property type="entry name" value="Asp_decarbox"/>
    <property type="match status" value="1"/>
</dbReference>
<dbReference type="Gene3D" id="2.40.40.20">
    <property type="match status" value="1"/>
</dbReference>
<dbReference type="HAMAP" id="MF_00446">
    <property type="entry name" value="PanD"/>
    <property type="match status" value="1"/>
</dbReference>
<dbReference type="InterPro" id="IPR009010">
    <property type="entry name" value="Asp_de-COase-like_dom_sf"/>
</dbReference>
<dbReference type="InterPro" id="IPR003190">
    <property type="entry name" value="Asp_decarbox"/>
</dbReference>
<dbReference type="NCBIfam" id="TIGR00223">
    <property type="entry name" value="panD"/>
    <property type="match status" value="1"/>
</dbReference>
<dbReference type="PANTHER" id="PTHR21012">
    <property type="entry name" value="ASPARTATE 1-DECARBOXYLASE"/>
    <property type="match status" value="1"/>
</dbReference>
<dbReference type="PANTHER" id="PTHR21012:SF0">
    <property type="entry name" value="ASPARTATE 1-DECARBOXYLASE"/>
    <property type="match status" value="1"/>
</dbReference>
<dbReference type="Pfam" id="PF02261">
    <property type="entry name" value="Asp_decarbox"/>
    <property type="match status" value="1"/>
</dbReference>
<dbReference type="PIRSF" id="PIRSF006246">
    <property type="entry name" value="Asp_decarbox"/>
    <property type="match status" value="1"/>
</dbReference>
<dbReference type="SUPFAM" id="SSF50692">
    <property type="entry name" value="ADC-like"/>
    <property type="match status" value="1"/>
</dbReference>
<protein>
    <recommendedName>
        <fullName evidence="1">Aspartate 1-decarboxylase</fullName>
        <ecNumber evidence="1">4.1.1.11</ecNumber>
    </recommendedName>
    <alternativeName>
        <fullName evidence="1">Aspartate alpha-decarboxylase</fullName>
    </alternativeName>
    <component>
        <recommendedName>
            <fullName evidence="1">Aspartate 1-decarboxylase beta chain</fullName>
        </recommendedName>
    </component>
    <component>
        <recommendedName>
            <fullName evidence="1">Aspartate 1-decarboxylase alpha chain</fullName>
        </recommendedName>
    </component>
</protein>
<comment type="function">
    <text evidence="1">Catalyzes the pyruvoyl-dependent decarboxylation of aspartate to produce beta-alanine.</text>
</comment>
<comment type="catalytic activity">
    <reaction evidence="1">
        <text>L-aspartate + H(+) = beta-alanine + CO2</text>
        <dbReference type="Rhea" id="RHEA:19497"/>
        <dbReference type="ChEBI" id="CHEBI:15378"/>
        <dbReference type="ChEBI" id="CHEBI:16526"/>
        <dbReference type="ChEBI" id="CHEBI:29991"/>
        <dbReference type="ChEBI" id="CHEBI:57966"/>
        <dbReference type="EC" id="4.1.1.11"/>
    </reaction>
</comment>
<comment type="cofactor">
    <cofactor evidence="1">
        <name>pyruvate</name>
        <dbReference type="ChEBI" id="CHEBI:15361"/>
    </cofactor>
    <text evidence="1">Binds 1 pyruvoyl group covalently per subunit.</text>
</comment>
<comment type="pathway">
    <text evidence="1">Cofactor biosynthesis; (R)-pantothenate biosynthesis; beta-alanine from L-aspartate: step 1/1.</text>
</comment>
<comment type="subunit">
    <text evidence="1">Heterooctamer of four alpha and four beta subunits.</text>
</comment>
<comment type="subcellular location">
    <subcellularLocation>
        <location evidence="1">Cytoplasm</location>
    </subcellularLocation>
</comment>
<comment type="PTM">
    <text evidence="1">Is synthesized initially as an inactive proenzyme, which is activated by self-cleavage at a specific serine bond to produce a beta-subunit with a hydroxyl group at its C-terminus and an alpha-subunit with a pyruvoyl group at its N-terminus.</text>
</comment>
<comment type="similarity">
    <text evidence="1">Belongs to the PanD family.</text>
</comment>
<gene>
    <name evidence="1" type="primary">panD</name>
    <name type="ordered locus">BCG_3665c</name>
</gene>
<sequence length="139" mass="14885">MLRTMLKSKIHRATVTCADLHYVGSVTIDADLMDAADLLEGEQVTIVDIDNGARLVTYAITGERGSGVIGINGAAAHLVHPGDLVILIAYATMDDARARTYQPRIVFVDAYNKPIDMGHDPAFVPENAGELLDPRLGVG</sequence>
<feature type="chain" id="PRO_0000307019" description="Aspartate 1-decarboxylase beta chain" evidence="1">
    <location>
        <begin position="1"/>
        <end position="24"/>
    </location>
</feature>
<feature type="chain" id="PRO_0000307020" description="Aspartate 1-decarboxylase alpha chain" evidence="1">
    <location>
        <begin position="25"/>
        <end position="139"/>
    </location>
</feature>
<feature type="active site" description="Schiff-base intermediate with substrate; via pyruvic acid" evidence="1">
    <location>
        <position position="25"/>
    </location>
</feature>
<feature type="active site" description="Proton donor" evidence="1">
    <location>
        <position position="58"/>
    </location>
</feature>
<feature type="binding site" evidence="1">
    <location>
        <position position="57"/>
    </location>
    <ligand>
        <name>substrate</name>
    </ligand>
</feature>
<feature type="binding site" evidence="1">
    <location>
        <begin position="73"/>
        <end position="75"/>
    </location>
    <ligand>
        <name>substrate</name>
    </ligand>
</feature>
<feature type="modified residue" description="Pyruvic acid (Ser)" evidence="1">
    <location>
        <position position="25"/>
    </location>
</feature>
<keyword id="KW-0068">Autocatalytic cleavage</keyword>
<keyword id="KW-0963">Cytoplasm</keyword>
<keyword id="KW-0210">Decarboxylase</keyword>
<keyword id="KW-0456">Lyase</keyword>
<keyword id="KW-0566">Pantothenate biosynthesis</keyword>
<keyword id="KW-0670">Pyruvate</keyword>
<keyword id="KW-0704">Schiff base</keyword>
<keyword id="KW-0865">Zymogen</keyword>
<reference key="1">
    <citation type="journal article" date="2007" name="Proc. Natl. Acad. Sci. U.S.A.">
        <title>Genome plasticity of BCG and impact on vaccine efficacy.</title>
        <authorList>
            <person name="Brosch R."/>
            <person name="Gordon S.V."/>
            <person name="Garnier T."/>
            <person name="Eiglmeier K."/>
            <person name="Frigui W."/>
            <person name="Valenti P."/>
            <person name="Dos Santos S."/>
            <person name="Duthoy S."/>
            <person name="Lacroix C."/>
            <person name="Garcia-Pelayo C."/>
            <person name="Inwald J.K."/>
            <person name="Golby P."/>
            <person name="Garcia J.N."/>
            <person name="Hewinson R.G."/>
            <person name="Behr M.A."/>
            <person name="Quail M.A."/>
            <person name="Churcher C."/>
            <person name="Barrell B.G."/>
            <person name="Parkhill J."/>
            <person name="Cole S.T."/>
        </authorList>
    </citation>
    <scope>NUCLEOTIDE SEQUENCE [LARGE SCALE GENOMIC DNA]</scope>
    <source>
        <strain>BCG / Pasteur 1173P2</strain>
    </source>
</reference>
<name>PAND_MYCBP</name>
<proteinExistence type="inferred from homology"/>
<organism>
    <name type="scientific">Mycobacterium bovis (strain BCG / Pasteur 1173P2)</name>
    <dbReference type="NCBI Taxonomy" id="410289"/>
    <lineage>
        <taxon>Bacteria</taxon>
        <taxon>Bacillati</taxon>
        <taxon>Actinomycetota</taxon>
        <taxon>Actinomycetes</taxon>
        <taxon>Mycobacteriales</taxon>
        <taxon>Mycobacteriaceae</taxon>
        <taxon>Mycobacterium</taxon>
        <taxon>Mycobacterium tuberculosis complex</taxon>
    </lineage>
</organism>
<evidence type="ECO:0000255" key="1">
    <source>
        <dbReference type="HAMAP-Rule" id="MF_00446"/>
    </source>
</evidence>